<organism>
    <name type="scientific">Xenopus laevis</name>
    <name type="common">African clawed frog</name>
    <dbReference type="NCBI Taxonomy" id="8355"/>
    <lineage>
        <taxon>Eukaryota</taxon>
        <taxon>Metazoa</taxon>
        <taxon>Chordata</taxon>
        <taxon>Craniata</taxon>
        <taxon>Vertebrata</taxon>
        <taxon>Euteleostomi</taxon>
        <taxon>Amphibia</taxon>
        <taxon>Batrachia</taxon>
        <taxon>Anura</taxon>
        <taxon>Pipoidea</taxon>
        <taxon>Pipidae</taxon>
        <taxon>Xenopodinae</taxon>
        <taxon>Xenopus</taxon>
        <taxon>Xenopus</taxon>
    </lineage>
</organism>
<proteinExistence type="evidence at transcript level"/>
<gene>
    <name type="primary">sap130-b</name>
</gene>
<reference key="1">
    <citation type="submission" date="2004-12" db="EMBL/GenBank/DDBJ databases">
        <authorList>
            <consortium name="NIH - Xenopus Gene Collection (XGC) project"/>
        </authorList>
    </citation>
    <scope>NUCLEOTIDE SEQUENCE [LARGE SCALE MRNA]</scope>
    <source>
        <tissue>Testis</tissue>
    </source>
</reference>
<keyword id="KW-0539">Nucleus</keyword>
<keyword id="KW-1185">Reference proteome</keyword>
<keyword id="KW-0678">Repressor</keyword>
<keyword id="KW-0804">Transcription</keyword>
<keyword id="KW-0805">Transcription regulation</keyword>
<name>SP13B_XENLA</name>
<dbReference type="EMBL" id="BC088715">
    <property type="protein sequence ID" value="AAH88715.1"/>
    <property type="molecule type" value="mRNA"/>
</dbReference>
<dbReference type="RefSeq" id="NP_001088898.1">
    <property type="nucleotide sequence ID" value="NM_001095429.1"/>
</dbReference>
<dbReference type="SMR" id="Q5M7C3"/>
<dbReference type="DNASU" id="496245"/>
<dbReference type="GeneID" id="496245"/>
<dbReference type="KEGG" id="xla:496245"/>
<dbReference type="AGR" id="Xenbase:XB-GENE-6252221"/>
<dbReference type="CTD" id="496245"/>
<dbReference type="Xenbase" id="XB-GENE-6252221">
    <property type="gene designation" value="sap130.L"/>
</dbReference>
<dbReference type="OMA" id="GXVPPLA"/>
<dbReference type="OrthoDB" id="10048604at2759"/>
<dbReference type="Proteomes" id="UP000186698">
    <property type="component" value="Chromosome 5L"/>
</dbReference>
<dbReference type="Bgee" id="496245">
    <property type="expression patterns" value="Expressed in testis and 19 other cell types or tissues"/>
</dbReference>
<dbReference type="GO" id="GO:0070822">
    <property type="term" value="C:Sin3-type complex"/>
    <property type="evidence" value="ECO:0000318"/>
    <property type="project" value="GO_Central"/>
</dbReference>
<dbReference type="GO" id="GO:0000122">
    <property type="term" value="P:negative regulation of transcription by RNA polymerase II"/>
    <property type="evidence" value="ECO:0000318"/>
    <property type="project" value="GO_Central"/>
</dbReference>
<dbReference type="InterPro" id="IPR024137">
    <property type="entry name" value="His_deAcase_cplx_SAP130"/>
</dbReference>
<dbReference type="InterPro" id="IPR031963">
    <property type="entry name" value="SAP130_C"/>
</dbReference>
<dbReference type="PANTHER" id="PTHR13497">
    <property type="entry name" value="HISTONE DEACETYLASE COMPLEX SUBUNIT SAP130"/>
    <property type="match status" value="1"/>
</dbReference>
<dbReference type="PANTHER" id="PTHR13497:SF3">
    <property type="entry name" value="HISTONE DEACETYLASE COMPLEX SUBUNIT SAP130"/>
    <property type="match status" value="1"/>
</dbReference>
<dbReference type="Pfam" id="PF16014">
    <property type="entry name" value="SAP130_C"/>
    <property type="match status" value="1"/>
</dbReference>
<feature type="chain" id="PRO_0000283740" description="Histone deacetylase complex subunit SAP130-B">
    <location>
        <begin position="1"/>
        <end position="1041"/>
    </location>
</feature>
<feature type="region of interest" description="Disordered" evidence="2">
    <location>
        <begin position="1"/>
        <end position="62"/>
    </location>
</feature>
<feature type="region of interest" description="Disordered" evidence="2">
    <location>
        <begin position="111"/>
        <end position="131"/>
    </location>
</feature>
<feature type="region of interest" description="Disordered" evidence="2">
    <location>
        <begin position="572"/>
        <end position="592"/>
    </location>
</feature>
<feature type="region of interest" description="Disordered" evidence="2">
    <location>
        <begin position="614"/>
        <end position="769"/>
    </location>
</feature>
<feature type="region of interest" description="Disordered" evidence="2">
    <location>
        <begin position="806"/>
        <end position="852"/>
    </location>
</feature>
<feature type="compositionally biased region" description="Polar residues" evidence="2">
    <location>
        <begin position="18"/>
        <end position="30"/>
    </location>
</feature>
<feature type="compositionally biased region" description="Basic and acidic residues" evidence="2">
    <location>
        <begin position="33"/>
        <end position="42"/>
    </location>
</feature>
<feature type="compositionally biased region" description="Low complexity" evidence="2">
    <location>
        <begin position="576"/>
        <end position="592"/>
    </location>
</feature>
<feature type="compositionally biased region" description="Polar residues" evidence="2">
    <location>
        <begin position="614"/>
        <end position="641"/>
    </location>
</feature>
<feature type="compositionally biased region" description="Low complexity" evidence="2">
    <location>
        <begin position="707"/>
        <end position="728"/>
    </location>
</feature>
<evidence type="ECO:0000250" key="1"/>
<evidence type="ECO:0000256" key="2">
    <source>
        <dbReference type="SAM" id="MobiDB-lite"/>
    </source>
</evidence>
<evidence type="ECO:0000305" key="3"/>
<sequence length="1041" mass="109991">MSSQQFPRQAVSMPPPQVSNSGASVGQNVQGDEVAREIDVQSRDPLGASTVLPSRDDKQEPVVVRPYPQVQMLTSHHPLQPAPSLTMTAQPAHLTSAVPLSFSENILKTPKSTMPSRPIAPAPPSALSAVPKVSGQGTVTMESGLPQTSAIPVATISGQQGHPNSLHHIMAATNVQMSIIRSGAPGPPLHIGASHLPRGAAAAAVMSSSKVTTMLRPASAQIPSAAASQSATQHIIHPPIQSRPPVTTTSVSPAVVATVSATRAQSPVITTTPAHAAEPVLRPTLAFQQHPPPAAISIQRSAQARDAATTRITLPTHPALGGQKPQLHAMTQKTLFGTGNPVAAATVAPILATNTLPSVTTSGSAPHTQVSTSTIVTMTMPTHSSHATAGTASNIPVAKVVPQQITHTSPRIQSEYGTERGNLIPIPGHRASPNPMTMEARSENRQPVPVQLQYFLPTYPPSAYPLTAHTYTPITSSVSTIRQYPVSAQAPNSAITAQSVASTVHLNPMQLINMDTSHTRHIQGIQPAPVSAQGIQPSPFSAQGIQATPISTQGIHPTPINTQAIHPATSITNQGVQTSSVSSQQASSEPKSSVVLAEGATIIANPINSSFSATPAGTTVMQSHSQSPGIGSSPAQGSSPRPSILRKKPATEGLSVRKSLIPPHPGDAVSPRHDSALRSTSASPRPAGAKPKADLHVSVAPGVTGDPGAADQPSAAASLPSSHHPTAAVPSPPSQPVSGPMPSSIHITPATIPALSAPPPLLSNAPSGAVMPEDKMKEEAEPMDILRPVSAVPPLPPNSISSPLTVLANNISGPAGELPPGASPRKKPRKQQHVISTEEGDMMETNSTDEERCHAVKPFTSRPEKRKSPPKEYIDEEGVRYVPVRPRPPITLLRHYRNPWKAAYHHFQRYTDVRVKEEKKLTLQDVANQKGITCRVQGWKTHLCAAQLLQLIKLEQDVFERLTVLQEGLVPKKKTATDDDLHRINELIQGNMQRCKLVMDQITESRDCMLKVLDHKDRVLKLLNKSGASRRLSKVKPKDKM</sequence>
<comment type="function">
    <text evidence="1">Acts as a transcriptional repressor.</text>
</comment>
<comment type="subcellular location">
    <subcellularLocation>
        <location evidence="1">Nucleus</location>
    </subcellularLocation>
</comment>
<comment type="similarity">
    <text evidence="3">Belongs to the SAP130 family.</text>
</comment>
<accession>Q5M7C3</accession>
<protein>
    <recommendedName>
        <fullName>Histone deacetylase complex subunit SAP130-B</fullName>
    </recommendedName>
    <alternativeName>
        <fullName>130 kDa Sin3-associated polypeptide B</fullName>
    </alternativeName>
    <alternativeName>
        <fullName>Sin3-associated polypeptide p130 B</fullName>
    </alternativeName>
</protein>